<feature type="chain" id="PRO_0000087246" description="Fimbrial assembly protein, serogroup E2">
    <location>
        <begin position="1"/>
        <end position="48" status="greater than"/>
    </location>
</feature>
<feature type="non-terminal residue">
    <location>
        <position position="48"/>
    </location>
</feature>
<proteinExistence type="predicted"/>
<gene>
    <name type="primary">fimB</name>
</gene>
<organism>
    <name type="scientific">Dichelobacter nodosus</name>
    <name type="common">Bacteroides nodosus</name>
    <dbReference type="NCBI Taxonomy" id="870"/>
    <lineage>
        <taxon>Bacteria</taxon>
        <taxon>Pseudomonadati</taxon>
        <taxon>Pseudomonadota</taxon>
        <taxon>Gammaproteobacteria</taxon>
        <taxon>Cardiobacteriales</taxon>
        <taxon>Cardiobacteriaceae</taxon>
        <taxon>Dichelobacter</taxon>
    </lineage>
</organism>
<protein>
    <recommendedName>
        <fullName>Fimbrial assembly protein, serogroup E2</fullName>
    </recommendedName>
</protein>
<keyword id="KW-1029">Fimbrium biogenesis</keyword>
<accession>P17831</accession>
<dbReference type="EMBL" id="X52407">
    <property type="protein sequence ID" value="CAA36657.1"/>
    <property type="molecule type" value="Genomic_DNA"/>
</dbReference>
<dbReference type="SMR" id="P17831"/>
<sequence length="48" mass="5526">MNKQRFLFAAKISGIHFLLSLTVAALLAGLIFFVWYPFPYQKIMGSFK</sequence>
<reference key="1">
    <citation type="journal article" date="1991" name="Mol. Microbiol.">
        <title>Organization of the fimbrial gene region of Bacteroides nodosus: class I and class II strains.</title>
        <authorList>
            <person name="Hobbs M."/>
            <person name="Dalrymple B.P."/>
            <person name="Cox P.T."/>
            <person name="Livingstone S.P."/>
            <person name="Delaney S.F."/>
            <person name="Mattick J.S."/>
        </authorList>
    </citation>
    <scope>NUCLEOTIDE SEQUENCE [GENOMIC DNA]</scope>
    <source>
        <strain>Serogroup E2 isolate VCS1114</strain>
    </source>
</reference>
<name>FIMBE_DICNO</name>